<comment type="subcellular location">
    <subcellularLocation>
        <location evidence="3">Secreted</location>
    </subcellularLocation>
</comment>
<comment type="tissue specificity">
    <text evidence="5">Expressed by the venom duct.</text>
</comment>
<comment type="domain">
    <text evidence="4">The cysteine framework is III (CC-C-C-CC). Classified in the M-2 branch, since 2 residues stand between the fourth and the fifth cysteine residues.</text>
</comment>
<comment type="similarity">
    <text evidence="4">Belongs to the conotoxin M superfamily.</text>
</comment>
<protein>
    <recommendedName>
        <fullName>Conotoxin QcIIIB</fullName>
    </recommendedName>
</protein>
<organism>
    <name type="scientific">Conus quercinus</name>
    <name type="common">Oak cone</name>
    <dbReference type="NCBI Taxonomy" id="101313"/>
    <lineage>
        <taxon>Eukaryota</taxon>
        <taxon>Metazoa</taxon>
        <taxon>Spiralia</taxon>
        <taxon>Lophotrochozoa</taxon>
        <taxon>Mollusca</taxon>
        <taxon>Gastropoda</taxon>
        <taxon>Caenogastropoda</taxon>
        <taxon>Neogastropoda</taxon>
        <taxon>Conoidea</taxon>
        <taxon>Conidae</taxon>
        <taxon>Conus</taxon>
        <taxon>Lividoconus</taxon>
    </lineage>
</organism>
<feature type="peptide" id="PRO_0000044502" description="Conotoxin QcIIIB" evidence="3">
    <location>
        <begin position="1"/>
        <end position="15"/>
    </location>
</feature>
<feature type="modified residue" description="4-hydroxyproline" evidence="1">
    <location>
        <position position="11"/>
    </location>
</feature>
<feature type="disulfide bond" evidence="2">
    <location>
        <begin position="1"/>
        <end position="13"/>
    </location>
</feature>
<feature type="disulfide bond" evidence="2">
    <location>
        <begin position="2"/>
        <end position="9"/>
    </location>
</feature>
<feature type="disulfide bond" evidence="2">
    <location>
        <begin position="6"/>
        <end position="12"/>
    </location>
</feature>
<keyword id="KW-0903">Direct protein sequencing</keyword>
<keyword id="KW-1015">Disulfide bond</keyword>
<keyword id="KW-0379">Hydroxylation</keyword>
<keyword id="KW-0964">Secreted</keyword>
<keyword id="KW-0800">Toxin</keyword>
<accession>P58842</accession>
<name>M3B_CONQU</name>
<proteinExistence type="evidence at protein level"/>
<sequence>CCSRHCWVCIPCCPN</sequence>
<evidence type="ECO:0000250" key="1"/>
<evidence type="ECO:0000250" key="2">
    <source>
        <dbReference type="UniProtKB" id="P0CI24"/>
    </source>
</evidence>
<evidence type="ECO:0000269" key="3">
    <source>
    </source>
</evidence>
<evidence type="ECO:0000305" key="4"/>
<evidence type="ECO:0000305" key="5">
    <source>
    </source>
</evidence>
<reference key="1">
    <citation type="journal article" date="1990" name="Science">
        <title>Diversity of Conus neuropeptides.</title>
        <authorList>
            <person name="Olivera B.M."/>
            <person name="Rivier J."/>
            <person name="Clark C."/>
            <person name="Ramilo C.A."/>
            <person name="Corpuz G.P."/>
            <person name="Abogadie F.C."/>
            <person name="Mena E.E."/>
            <person name="Woodward S.R."/>
            <person name="Hillyard D.R."/>
            <person name="Cruz L.J."/>
        </authorList>
    </citation>
    <scope>PROTEIN SEQUENCE</scope>
    <scope>SUBCELLULAR LOCATION</scope>
</reference>
<dbReference type="ConoServer" id="1513">
    <property type="toxin name" value="QcIIIB"/>
</dbReference>
<dbReference type="GO" id="GO:0005576">
    <property type="term" value="C:extracellular region"/>
    <property type="evidence" value="ECO:0007669"/>
    <property type="project" value="UniProtKB-SubCell"/>
</dbReference>
<dbReference type="GO" id="GO:0090729">
    <property type="term" value="F:toxin activity"/>
    <property type="evidence" value="ECO:0007669"/>
    <property type="project" value="UniProtKB-KW"/>
</dbReference>